<evidence type="ECO:0000255" key="1">
    <source>
        <dbReference type="HAMAP-Rule" id="MF_00137"/>
    </source>
</evidence>
<accession>C1EV60</accession>
<proteinExistence type="inferred from homology"/>
<protein>
    <recommendedName>
        <fullName evidence="1">Phosphoribosylaminoimidazole-succinocarboxamide synthase</fullName>
        <ecNumber evidence="1">6.3.2.6</ecNumber>
    </recommendedName>
    <alternativeName>
        <fullName evidence="1">SAICAR synthetase</fullName>
    </alternativeName>
</protein>
<reference key="1">
    <citation type="submission" date="2009-02" db="EMBL/GenBank/DDBJ databases">
        <title>Genome sequence of Bacillus cereus 03BB102.</title>
        <authorList>
            <person name="Dodson R.J."/>
            <person name="Jackson P."/>
            <person name="Munk A.C."/>
            <person name="Brettin T."/>
            <person name="Bruce D."/>
            <person name="Detter C."/>
            <person name="Tapia R."/>
            <person name="Han C."/>
            <person name="Sutton G."/>
            <person name="Sims D."/>
        </authorList>
    </citation>
    <scope>NUCLEOTIDE SEQUENCE [LARGE SCALE GENOMIC DNA]</scope>
    <source>
        <strain>03BB102</strain>
    </source>
</reference>
<keyword id="KW-0067">ATP-binding</keyword>
<keyword id="KW-0436">Ligase</keyword>
<keyword id="KW-0547">Nucleotide-binding</keyword>
<keyword id="KW-0658">Purine biosynthesis</keyword>
<name>PUR7_BACC3</name>
<dbReference type="EC" id="6.3.2.6" evidence="1"/>
<dbReference type="EMBL" id="CP001407">
    <property type="protein sequence ID" value="ACO27215.1"/>
    <property type="molecule type" value="Genomic_DNA"/>
</dbReference>
<dbReference type="RefSeq" id="WP_001170540.1">
    <property type="nucleotide sequence ID" value="NZ_CP009318.1"/>
</dbReference>
<dbReference type="SMR" id="C1EV60"/>
<dbReference type="GeneID" id="45020350"/>
<dbReference type="KEGG" id="bcx:BCA_0365"/>
<dbReference type="PATRIC" id="fig|572264.18.peg.354"/>
<dbReference type="UniPathway" id="UPA00074">
    <property type="reaction ID" value="UER00131"/>
</dbReference>
<dbReference type="Proteomes" id="UP000002210">
    <property type="component" value="Chromosome"/>
</dbReference>
<dbReference type="GO" id="GO:0005524">
    <property type="term" value="F:ATP binding"/>
    <property type="evidence" value="ECO:0007669"/>
    <property type="project" value="UniProtKB-KW"/>
</dbReference>
<dbReference type="GO" id="GO:0004639">
    <property type="term" value="F:phosphoribosylaminoimidazolesuccinocarboxamide synthase activity"/>
    <property type="evidence" value="ECO:0007669"/>
    <property type="project" value="UniProtKB-UniRule"/>
</dbReference>
<dbReference type="GO" id="GO:0006189">
    <property type="term" value="P:'de novo' IMP biosynthetic process"/>
    <property type="evidence" value="ECO:0007669"/>
    <property type="project" value="UniProtKB-UniRule"/>
</dbReference>
<dbReference type="GO" id="GO:0009236">
    <property type="term" value="P:cobalamin biosynthetic process"/>
    <property type="evidence" value="ECO:0007669"/>
    <property type="project" value="InterPro"/>
</dbReference>
<dbReference type="CDD" id="cd01415">
    <property type="entry name" value="SAICAR_synt_PurC"/>
    <property type="match status" value="1"/>
</dbReference>
<dbReference type="FunFam" id="3.30.200.20:FF:000189">
    <property type="entry name" value="Phosphoribosylaminoimidazole-succinocarboxamide synthase"/>
    <property type="match status" value="1"/>
</dbReference>
<dbReference type="FunFam" id="3.30.470.20:FF:000006">
    <property type="entry name" value="Phosphoribosylaminoimidazole-succinocarboxamide synthase"/>
    <property type="match status" value="1"/>
</dbReference>
<dbReference type="Gene3D" id="3.30.470.20">
    <property type="entry name" value="ATP-grasp fold, B domain"/>
    <property type="match status" value="1"/>
</dbReference>
<dbReference type="Gene3D" id="3.30.200.20">
    <property type="entry name" value="Phosphorylase Kinase, domain 1"/>
    <property type="match status" value="1"/>
</dbReference>
<dbReference type="HAMAP" id="MF_00137">
    <property type="entry name" value="SAICAR_synth"/>
    <property type="match status" value="1"/>
</dbReference>
<dbReference type="InterPro" id="IPR028923">
    <property type="entry name" value="SAICAR_synt/ADE2_N"/>
</dbReference>
<dbReference type="InterPro" id="IPR033934">
    <property type="entry name" value="SAICAR_synt_PurC"/>
</dbReference>
<dbReference type="InterPro" id="IPR001636">
    <property type="entry name" value="SAICAR_synth"/>
</dbReference>
<dbReference type="InterPro" id="IPR050089">
    <property type="entry name" value="SAICAR_synthetase"/>
</dbReference>
<dbReference type="InterPro" id="IPR018236">
    <property type="entry name" value="SAICAR_synthetase_CS"/>
</dbReference>
<dbReference type="NCBIfam" id="TIGR00081">
    <property type="entry name" value="purC"/>
    <property type="match status" value="1"/>
</dbReference>
<dbReference type="PANTHER" id="PTHR43599">
    <property type="entry name" value="MULTIFUNCTIONAL PROTEIN ADE2"/>
    <property type="match status" value="1"/>
</dbReference>
<dbReference type="PANTHER" id="PTHR43599:SF3">
    <property type="entry name" value="SI:DKEY-6E2.2"/>
    <property type="match status" value="1"/>
</dbReference>
<dbReference type="Pfam" id="PF01259">
    <property type="entry name" value="SAICAR_synt"/>
    <property type="match status" value="1"/>
</dbReference>
<dbReference type="SUPFAM" id="SSF56104">
    <property type="entry name" value="SAICAR synthase-like"/>
    <property type="match status" value="1"/>
</dbReference>
<dbReference type="PROSITE" id="PS01057">
    <property type="entry name" value="SAICAR_SYNTHETASE_1"/>
    <property type="match status" value="1"/>
</dbReference>
<dbReference type="PROSITE" id="PS01058">
    <property type="entry name" value="SAICAR_SYNTHETASE_2"/>
    <property type="match status" value="1"/>
</dbReference>
<gene>
    <name evidence="1" type="primary">purC</name>
    <name type="ordered locus">BCA_0365</name>
</gene>
<comment type="catalytic activity">
    <reaction evidence="1">
        <text>5-amino-1-(5-phospho-D-ribosyl)imidazole-4-carboxylate + L-aspartate + ATP = (2S)-2-[5-amino-1-(5-phospho-beta-D-ribosyl)imidazole-4-carboxamido]succinate + ADP + phosphate + 2 H(+)</text>
        <dbReference type="Rhea" id="RHEA:22628"/>
        <dbReference type="ChEBI" id="CHEBI:15378"/>
        <dbReference type="ChEBI" id="CHEBI:29991"/>
        <dbReference type="ChEBI" id="CHEBI:30616"/>
        <dbReference type="ChEBI" id="CHEBI:43474"/>
        <dbReference type="ChEBI" id="CHEBI:58443"/>
        <dbReference type="ChEBI" id="CHEBI:77657"/>
        <dbReference type="ChEBI" id="CHEBI:456216"/>
        <dbReference type="EC" id="6.3.2.6"/>
    </reaction>
</comment>
<comment type="pathway">
    <text evidence="1">Purine metabolism; IMP biosynthesis via de novo pathway; 5-amino-1-(5-phospho-D-ribosyl)imidazole-4-carboxamide from 5-amino-1-(5-phospho-D-ribosyl)imidazole-4-carboxylate: step 1/2.</text>
</comment>
<comment type="similarity">
    <text evidence="1">Belongs to the SAICAR synthetase family.</text>
</comment>
<feature type="chain" id="PRO_1000122901" description="Phosphoribosylaminoimidazole-succinocarboxamide synthase">
    <location>
        <begin position="1"/>
        <end position="239"/>
    </location>
</feature>
<organism>
    <name type="scientific">Bacillus cereus (strain 03BB102)</name>
    <dbReference type="NCBI Taxonomy" id="572264"/>
    <lineage>
        <taxon>Bacteria</taxon>
        <taxon>Bacillati</taxon>
        <taxon>Bacillota</taxon>
        <taxon>Bacilli</taxon>
        <taxon>Bacillales</taxon>
        <taxon>Bacillaceae</taxon>
        <taxon>Bacillus</taxon>
        <taxon>Bacillus cereus group</taxon>
    </lineage>
</organism>
<sequence length="239" mass="27178">MQKLELLYEGKAKRIYRTESADMVWVEYKDSATAFNGEKKETITGKGRLNNEITTLLFRKLQEVGIKTHFVEKLSETEQLVKKVSIIPLEVVTRNVIAGSLSKRLGMEEGTVLAEPIVEFYFKDDDLGDPLVTEDHIRVLNVASPEQVSVLRDMALQINQVLIDHFASCRVRLVDFKLEFGVTDEGAIILADEISPDTCRLWDETSNEKFDKDVFRRDLGNLTDAYEEILKRLGGISHV</sequence>